<sequence length="253" mass="27462">MAVTRPPERSAEAVELIEGAGGRALVAPTLELKEAHTESLREVCRRADEWDLVIFTSQAAVESLFQLCREFAGKIRKDCLVAVIGPRTARVAGEHGLRVDIVPEDYTAEGLLDALTGLNIEGWKVALPRTLSARKVLPRGLEMMGAEVLVAEAYRSGLPEDTGPAEELIDGLLDGKVDAVTFTSPLTVENLFKIAGNRRKELIEVLKRVKVAAIGPITLRKLEEHGITAVTPERYTVKDMIAALAVSMGEDVD</sequence>
<feature type="chain" id="PRO_0000135250" description="Putative uroporphyrinogen-III synthase">
    <location>
        <begin position="1"/>
        <end position="253"/>
    </location>
</feature>
<name>HEM4_METTH</name>
<protein>
    <recommendedName>
        <fullName>Putative uroporphyrinogen-III synthase</fullName>
        <shortName>UROS</shortName>
        <ecNumber>4.2.1.75</ecNumber>
    </recommendedName>
    <alternativeName>
        <fullName>Hydroxymethylbilane hydrolyase [cyclizing]</fullName>
    </alternativeName>
    <alternativeName>
        <fullName>Uroporphyrinogen-III cosynthase</fullName>
    </alternativeName>
</protein>
<evidence type="ECO:0000250" key="1"/>
<evidence type="ECO:0000305" key="2"/>
<gene>
    <name type="primary">hemD</name>
    <name type="ordered locus">MTH_166</name>
</gene>
<dbReference type="EC" id="4.2.1.75"/>
<dbReference type="EMBL" id="AE000666">
    <property type="protein sequence ID" value="AAB84672.1"/>
    <property type="molecule type" value="Genomic_DNA"/>
</dbReference>
<dbReference type="PIR" id="H69088">
    <property type="entry name" value="H69088"/>
</dbReference>
<dbReference type="SMR" id="O26268"/>
<dbReference type="FunCoup" id="O26268">
    <property type="interactions" value="90"/>
</dbReference>
<dbReference type="STRING" id="187420.MTH_166"/>
<dbReference type="PaxDb" id="187420-MTH_166"/>
<dbReference type="EnsemblBacteria" id="AAB84672">
    <property type="protein sequence ID" value="AAB84672"/>
    <property type="gene ID" value="MTH_166"/>
</dbReference>
<dbReference type="KEGG" id="mth:MTH_166"/>
<dbReference type="PATRIC" id="fig|187420.15.peg.139"/>
<dbReference type="HOGENOM" id="CLU_011276_9_5_2"/>
<dbReference type="InParanoid" id="O26268"/>
<dbReference type="UniPathway" id="UPA00251">
    <property type="reaction ID" value="UER00320"/>
</dbReference>
<dbReference type="Proteomes" id="UP000005223">
    <property type="component" value="Chromosome"/>
</dbReference>
<dbReference type="GO" id="GO:0004852">
    <property type="term" value="F:uroporphyrinogen-III synthase activity"/>
    <property type="evidence" value="ECO:0007669"/>
    <property type="project" value="UniProtKB-EC"/>
</dbReference>
<dbReference type="GO" id="GO:0006782">
    <property type="term" value="P:protoporphyrinogen IX biosynthetic process"/>
    <property type="evidence" value="ECO:0007669"/>
    <property type="project" value="UniProtKB-UniPathway"/>
</dbReference>
<dbReference type="GO" id="GO:0006780">
    <property type="term" value="P:uroporphyrinogen III biosynthetic process"/>
    <property type="evidence" value="ECO:0007669"/>
    <property type="project" value="InterPro"/>
</dbReference>
<dbReference type="CDD" id="cd06578">
    <property type="entry name" value="HemD"/>
    <property type="match status" value="1"/>
</dbReference>
<dbReference type="Gene3D" id="3.40.50.10090">
    <property type="match status" value="2"/>
</dbReference>
<dbReference type="InterPro" id="IPR036108">
    <property type="entry name" value="4pyrrol_syn_uPrphyn_synt_sf"/>
</dbReference>
<dbReference type="InterPro" id="IPR003754">
    <property type="entry name" value="4pyrrol_synth_uPrphyn_synth"/>
</dbReference>
<dbReference type="InterPro" id="IPR039793">
    <property type="entry name" value="UROS/Hem4"/>
</dbReference>
<dbReference type="PANTHER" id="PTHR40082">
    <property type="entry name" value="BLR5956 PROTEIN"/>
    <property type="match status" value="1"/>
</dbReference>
<dbReference type="PANTHER" id="PTHR40082:SF1">
    <property type="entry name" value="BLR5956 PROTEIN"/>
    <property type="match status" value="1"/>
</dbReference>
<dbReference type="Pfam" id="PF02602">
    <property type="entry name" value="HEM4"/>
    <property type="match status" value="1"/>
</dbReference>
<dbReference type="SUPFAM" id="SSF69618">
    <property type="entry name" value="HemD-like"/>
    <property type="match status" value="1"/>
</dbReference>
<reference key="1">
    <citation type="journal article" date="1997" name="J. Bacteriol.">
        <title>Complete genome sequence of Methanobacterium thermoautotrophicum deltaH: functional analysis and comparative genomics.</title>
        <authorList>
            <person name="Smith D.R."/>
            <person name="Doucette-Stamm L.A."/>
            <person name="Deloughery C."/>
            <person name="Lee H.-M."/>
            <person name="Dubois J."/>
            <person name="Aldredge T."/>
            <person name="Bashirzadeh R."/>
            <person name="Blakely D."/>
            <person name="Cook R."/>
            <person name="Gilbert K."/>
            <person name="Harrison D."/>
            <person name="Hoang L."/>
            <person name="Keagle P."/>
            <person name="Lumm W."/>
            <person name="Pothier B."/>
            <person name="Qiu D."/>
            <person name="Spadafora R."/>
            <person name="Vicare R."/>
            <person name="Wang Y."/>
            <person name="Wierzbowski J."/>
            <person name="Gibson R."/>
            <person name="Jiwani N."/>
            <person name="Caruso A."/>
            <person name="Bush D."/>
            <person name="Safer H."/>
            <person name="Patwell D."/>
            <person name="Prabhakar S."/>
            <person name="McDougall S."/>
            <person name="Shimer G."/>
            <person name="Goyal A."/>
            <person name="Pietrovski S."/>
            <person name="Church G.M."/>
            <person name="Daniels C.J."/>
            <person name="Mao J.-I."/>
            <person name="Rice P."/>
            <person name="Noelling J."/>
            <person name="Reeve J.N."/>
        </authorList>
    </citation>
    <scope>NUCLEOTIDE SEQUENCE [LARGE SCALE GENOMIC DNA]</scope>
    <source>
        <strain>ATCC 29096 / DSM 1053 / JCM 10044 / NBRC 100330 / Delta H</strain>
    </source>
</reference>
<organism>
    <name type="scientific">Methanothermobacter thermautotrophicus (strain ATCC 29096 / DSM 1053 / JCM 10044 / NBRC 100330 / Delta H)</name>
    <name type="common">Methanobacterium thermoautotrophicum</name>
    <dbReference type="NCBI Taxonomy" id="187420"/>
    <lineage>
        <taxon>Archaea</taxon>
        <taxon>Methanobacteriati</taxon>
        <taxon>Methanobacteriota</taxon>
        <taxon>Methanomada group</taxon>
        <taxon>Methanobacteria</taxon>
        <taxon>Methanobacteriales</taxon>
        <taxon>Methanobacteriaceae</taxon>
        <taxon>Methanothermobacter</taxon>
    </lineage>
</organism>
<proteinExistence type="inferred from homology"/>
<keyword id="KW-0456">Lyase</keyword>
<keyword id="KW-0627">Porphyrin biosynthesis</keyword>
<keyword id="KW-1185">Reference proteome</keyword>
<comment type="function">
    <text evidence="1">Catalyzes cyclization of the linear tetrapyrrole, hydroxymethylbilane, to the macrocyclic uroporphyrinogen III.</text>
</comment>
<comment type="catalytic activity">
    <reaction>
        <text>hydroxymethylbilane = uroporphyrinogen III + H2O</text>
        <dbReference type="Rhea" id="RHEA:18965"/>
        <dbReference type="ChEBI" id="CHEBI:15377"/>
        <dbReference type="ChEBI" id="CHEBI:57308"/>
        <dbReference type="ChEBI" id="CHEBI:57845"/>
        <dbReference type="EC" id="4.2.1.75"/>
    </reaction>
</comment>
<comment type="pathway">
    <text>Porphyrin-containing compound metabolism; protoporphyrin-IX biosynthesis; coproporphyrinogen-III from 5-aminolevulinate: step 3/4.</text>
</comment>
<comment type="similarity">
    <text evidence="2">Belongs to the uroporphyrinogen-III synthase family.</text>
</comment>
<accession>O26268</accession>